<dbReference type="EMBL" id="CP001614">
    <property type="protein sequence ID" value="ACR11928.1"/>
    <property type="molecule type" value="Genomic_DNA"/>
</dbReference>
<dbReference type="RefSeq" id="WP_015818040.1">
    <property type="nucleotide sequence ID" value="NC_012997.1"/>
</dbReference>
<dbReference type="SMR" id="C5BLV6"/>
<dbReference type="STRING" id="377629.TERTU_2630"/>
<dbReference type="KEGG" id="ttu:TERTU_2630"/>
<dbReference type="eggNOG" id="COG1160">
    <property type="taxonomic scope" value="Bacteria"/>
</dbReference>
<dbReference type="HOGENOM" id="CLU_016077_6_2_6"/>
<dbReference type="OrthoDB" id="9805918at2"/>
<dbReference type="Proteomes" id="UP000009080">
    <property type="component" value="Chromosome"/>
</dbReference>
<dbReference type="GO" id="GO:0005525">
    <property type="term" value="F:GTP binding"/>
    <property type="evidence" value="ECO:0007669"/>
    <property type="project" value="UniProtKB-UniRule"/>
</dbReference>
<dbReference type="GO" id="GO:0043022">
    <property type="term" value="F:ribosome binding"/>
    <property type="evidence" value="ECO:0007669"/>
    <property type="project" value="TreeGrafter"/>
</dbReference>
<dbReference type="GO" id="GO:0042254">
    <property type="term" value="P:ribosome biogenesis"/>
    <property type="evidence" value="ECO:0007669"/>
    <property type="project" value="UniProtKB-KW"/>
</dbReference>
<dbReference type="CDD" id="cd01894">
    <property type="entry name" value="EngA1"/>
    <property type="match status" value="1"/>
</dbReference>
<dbReference type="CDD" id="cd01895">
    <property type="entry name" value="EngA2"/>
    <property type="match status" value="1"/>
</dbReference>
<dbReference type="FunFam" id="3.30.300.20:FF:000004">
    <property type="entry name" value="GTPase Der"/>
    <property type="match status" value="1"/>
</dbReference>
<dbReference type="FunFam" id="3.40.50.300:FF:000040">
    <property type="entry name" value="GTPase Der"/>
    <property type="match status" value="1"/>
</dbReference>
<dbReference type="FunFam" id="3.40.50.300:FF:000057">
    <property type="entry name" value="GTPase Der"/>
    <property type="match status" value="1"/>
</dbReference>
<dbReference type="Gene3D" id="3.30.300.20">
    <property type="match status" value="1"/>
</dbReference>
<dbReference type="Gene3D" id="3.40.50.300">
    <property type="entry name" value="P-loop containing nucleotide triphosphate hydrolases"/>
    <property type="match status" value="2"/>
</dbReference>
<dbReference type="HAMAP" id="MF_00195">
    <property type="entry name" value="GTPase_Der"/>
    <property type="match status" value="1"/>
</dbReference>
<dbReference type="InterPro" id="IPR031166">
    <property type="entry name" value="G_ENGA"/>
</dbReference>
<dbReference type="InterPro" id="IPR006073">
    <property type="entry name" value="GTP-bd"/>
</dbReference>
<dbReference type="InterPro" id="IPR016484">
    <property type="entry name" value="GTPase_Der"/>
</dbReference>
<dbReference type="InterPro" id="IPR032859">
    <property type="entry name" value="KH_dom-like"/>
</dbReference>
<dbReference type="InterPro" id="IPR015946">
    <property type="entry name" value="KH_dom-like_a/b"/>
</dbReference>
<dbReference type="InterPro" id="IPR027417">
    <property type="entry name" value="P-loop_NTPase"/>
</dbReference>
<dbReference type="InterPro" id="IPR005225">
    <property type="entry name" value="Small_GTP-bd"/>
</dbReference>
<dbReference type="NCBIfam" id="TIGR03594">
    <property type="entry name" value="GTPase_EngA"/>
    <property type="match status" value="1"/>
</dbReference>
<dbReference type="NCBIfam" id="TIGR00231">
    <property type="entry name" value="small_GTP"/>
    <property type="match status" value="2"/>
</dbReference>
<dbReference type="PANTHER" id="PTHR43834">
    <property type="entry name" value="GTPASE DER"/>
    <property type="match status" value="1"/>
</dbReference>
<dbReference type="PANTHER" id="PTHR43834:SF6">
    <property type="entry name" value="GTPASE DER"/>
    <property type="match status" value="1"/>
</dbReference>
<dbReference type="Pfam" id="PF14714">
    <property type="entry name" value="KH_dom-like"/>
    <property type="match status" value="1"/>
</dbReference>
<dbReference type="Pfam" id="PF01926">
    <property type="entry name" value="MMR_HSR1"/>
    <property type="match status" value="2"/>
</dbReference>
<dbReference type="PIRSF" id="PIRSF006485">
    <property type="entry name" value="GTP-binding_EngA"/>
    <property type="match status" value="1"/>
</dbReference>
<dbReference type="PRINTS" id="PR00326">
    <property type="entry name" value="GTP1OBG"/>
</dbReference>
<dbReference type="SUPFAM" id="SSF52540">
    <property type="entry name" value="P-loop containing nucleoside triphosphate hydrolases"/>
    <property type="match status" value="2"/>
</dbReference>
<dbReference type="PROSITE" id="PS51712">
    <property type="entry name" value="G_ENGA"/>
    <property type="match status" value="2"/>
</dbReference>
<evidence type="ECO:0000255" key="1">
    <source>
        <dbReference type="HAMAP-Rule" id="MF_00195"/>
    </source>
</evidence>
<sequence>MIPTIALVGRPNVGKSTLFNRLTKTRDAIVANFAGLTRDRKYGDAEFEGKRFIVVDTGGISGDEEGIDSVMAEQSLQAIAESDIILFLVDCRDGLTHVDSQIAQHLRTLHKPTFLVANKVDGQNHDLAIAPFFELGLGEVHSVAAAHGRGVNTLMATVLADIAVESEADEADAERRLKMAIIGRPNVGKSTLVNRMLGEERVVVFDMPGTTRDSIYIDYERDEKHYTLIDTAGVRRRKNVKLTVEKFSIIKTLQAINDANVVILVMDASEGIVDQDLHLLGHAIESGRALVVALNKWDGLEDDHKSYVKTELQRRLSFVDYADLHFISALHGTGVGNLYKSVEKAYQAATEKYSTSFLTRILEDAVTAHQPPLVRGRRIKLRYAHAGGHNPPIIVIHGTQTSEVPNHYTRYLEKVYRRALELHGTPVRIEYRSGDNPFAGRKNKLTERQLTKKRRLMKHVKKKK</sequence>
<keyword id="KW-0342">GTP-binding</keyword>
<keyword id="KW-0547">Nucleotide-binding</keyword>
<keyword id="KW-1185">Reference proteome</keyword>
<keyword id="KW-0677">Repeat</keyword>
<keyword id="KW-0690">Ribosome biogenesis</keyword>
<organism>
    <name type="scientific">Teredinibacter turnerae (strain ATCC 39867 / T7901)</name>
    <dbReference type="NCBI Taxonomy" id="377629"/>
    <lineage>
        <taxon>Bacteria</taxon>
        <taxon>Pseudomonadati</taxon>
        <taxon>Pseudomonadota</taxon>
        <taxon>Gammaproteobacteria</taxon>
        <taxon>Cellvibrionales</taxon>
        <taxon>Cellvibrionaceae</taxon>
        <taxon>Teredinibacter</taxon>
    </lineage>
</organism>
<name>DER_TERTT</name>
<comment type="function">
    <text evidence="1">GTPase that plays an essential role in the late steps of ribosome biogenesis.</text>
</comment>
<comment type="subunit">
    <text evidence="1">Associates with the 50S ribosomal subunit.</text>
</comment>
<comment type="similarity">
    <text evidence="1">Belongs to the TRAFAC class TrmE-Era-EngA-EngB-Septin-like GTPase superfamily. EngA (Der) GTPase family.</text>
</comment>
<proteinExistence type="inferred from homology"/>
<protein>
    <recommendedName>
        <fullName evidence="1">GTPase Der</fullName>
    </recommendedName>
    <alternativeName>
        <fullName evidence="1">GTP-binding protein EngA</fullName>
    </alternativeName>
</protein>
<reference key="1">
    <citation type="journal article" date="2009" name="PLoS ONE">
        <title>The complete genome of Teredinibacter turnerae T7901: an intracellular endosymbiont of marine wood-boring bivalves (shipworms).</title>
        <authorList>
            <person name="Yang J.C."/>
            <person name="Madupu R."/>
            <person name="Durkin A.S."/>
            <person name="Ekborg N.A."/>
            <person name="Pedamallu C.S."/>
            <person name="Hostetler J.B."/>
            <person name="Radune D."/>
            <person name="Toms B.S."/>
            <person name="Henrissat B."/>
            <person name="Coutinho P.M."/>
            <person name="Schwarz S."/>
            <person name="Field L."/>
            <person name="Trindade-Silva A.E."/>
            <person name="Soares C.A.G."/>
            <person name="Elshahawi S."/>
            <person name="Hanora A."/>
            <person name="Schmidt E.W."/>
            <person name="Haygood M.G."/>
            <person name="Posfai J."/>
            <person name="Benner J."/>
            <person name="Madinger C."/>
            <person name="Nove J."/>
            <person name="Anton B."/>
            <person name="Chaudhary K."/>
            <person name="Foster J."/>
            <person name="Holman A."/>
            <person name="Kumar S."/>
            <person name="Lessard P.A."/>
            <person name="Luyten Y.A."/>
            <person name="Slatko B."/>
            <person name="Wood N."/>
            <person name="Wu B."/>
            <person name="Teplitski M."/>
            <person name="Mougous J.D."/>
            <person name="Ward N."/>
            <person name="Eisen J.A."/>
            <person name="Badger J.H."/>
            <person name="Distel D.L."/>
        </authorList>
    </citation>
    <scope>NUCLEOTIDE SEQUENCE [LARGE SCALE GENOMIC DNA]</scope>
    <source>
        <strain>ATCC 39867 / T7901</strain>
    </source>
</reference>
<accession>C5BLV6</accession>
<feature type="chain" id="PRO_1000204048" description="GTPase Der">
    <location>
        <begin position="1"/>
        <end position="464"/>
    </location>
</feature>
<feature type="domain" description="EngA-type G 1">
    <location>
        <begin position="3"/>
        <end position="166"/>
    </location>
</feature>
<feature type="domain" description="EngA-type G 2">
    <location>
        <begin position="177"/>
        <end position="350"/>
    </location>
</feature>
<feature type="domain" description="KH-like" evidence="1">
    <location>
        <begin position="351"/>
        <end position="435"/>
    </location>
</feature>
<feature type="binding site" evidence="1">
    <location>
        <begin position="9"/>
        <end position="16"/>
    </location>
    <ligand>
        <name>GTP</name>
        <dbReference type="ChEBI" id="CHEBI:37565"/>
        <label>1</label>
    </ligand>
</feature>
<feature type="binding site" evidence="1">
    <location>
        <begin position="56"/>
        <end position="60"/>
    </location>
    <ligand>
        <name>GTP</name>
        <dbReference type="ChEBI" id="CHEBI:37565"/>
        <label>1</label>
    </ligand>
</feature>
<feature type="binding site" evidence="1">
    <location>
        <begin position="118"/>
        <end position="121"/>
    </location>
    <ligand>
        <name>GTP</name>
        <dbReference type="ChEBI" id="CHEBI:37565"/>
        <label>1</label>
    </ligand>
</feature>
<feature type="binding site" evidence="1">
    <location>
        <begin position="183"/>
        <end position="190"/>
    </location>
    <ligand>
        <name>GTP</name>
        <dbReference type="ChEBI" id="CHEBI:37565"/>
        <label>2</label>
    </ligand>
</feature>
<feature type="binding site" evidence="1">
    <location>
        <begin position="230"/>
        <end position="234"/>
    </location>
    <ligand>
        <name>GTP</name>
        <dbReference type="ChEBI" id="CHEBI:37565"/>
        <label>2</label>
    </ligand>
</feature>
<feature type="binding site" evidence="1">
    <location>
        <begin position="295"/>
        <end position="298"/>
    </location>
    <ligand>
        <name>GTP</name>
        <dbReference type="ChEBI" id="CHEBI:37565"/>
        <label>2</label>
    </ligand>
</feature>
<gene>
    <name evidence="1" type="primary">der</name>
    <name type="synonym">engA</name>
    <name type="ordered locus">TERTU_2630</name>
</gene>